<name>RL7_PSEPF</name>
<evidence type="ECO:0000255" key="1">
    <source>
        <dbReference type="HAMAP-Rule" id="MF_00368"/>
    </source>
</evidence>
<evidence type="ECO:0000305" key="2"/>
<reference key="1">
    <citation type="journal article" date="2009" name="Genome Biol.">
        <title>Genomic and genetic analyses of diversity and plant interactions of Pseudomonas fluorescens.</title>
        <authorList>
            <person name="Silby M.W."/>
            <person name="Cerdeno-Tarraga A.M."/>
            <person name="Vernikos G.S."/>
            <person name="Giddens S.R."/>
            <person name="Jackson R.W."/>
            <person name="Preston G.M."/>
            <person name="Zhang X.-X."/>
            <person name="Moon C.D."/>
            <person name="Gehrig S.M."/>
            <person name="Godfrey S.A.C."/>
            <person name="Knight C.G."/>
            <person name="Malone J.G."/>
            <person name="Robinson Z."/>
            <person name="Spiers A.J."/>
            <person name="Harris S."/>
            <person name="Challis G.L."/>
            <person name="Yaxley A.M."/>
            <person name="Harris D."/>
            <person name="Seeger K."/>
            <person name="Murphy L."/>
            <person name="Rutter S."/>
            <person name="Squares R."/>
            <person name="Quail M.A."/>
            <person name="Saunders E."/>
            <person name="Mavromatis K."/>
            <person name="Brettin T.S."/>
            <person name="Bentley S.D."/>
            <person name="Hothersall J."/>
            <person name="Stephens E."/>
            <person name="Thomas C.M."/>
            <person name="Parkhill J."/>
            <person name="Levy S.B."/>
            <person name="Rainey P.B."/>
            <person name="Thomson N.R."/>
        </authorList>
    </citation>
    <scope>NUCLEOTIDE SEQUENCE [LARGE SCALE GENOMIC DNA]</scope>
    <source>
        <strain>Pf0-1</strain>
    </source>
</reference>
<dbReference type="EMBL" id="CP000094">
    <property type="protein sequence ID" value="ABA76824.1"/>
    <property type="molecule type" value="Genomic_DNA"/>
</dbReference>
<dbReference type="RefSeq" id="WP_007957596.1">
    <property type="nucleotide sequence ID" value="NC_007492.2"/>
</dbReference>
<dbReference type="SMR" id="Q3K5Y0"/>
<dbReference type="GeneID" id="98285446"/>
<dbReference type="KEGG" id="pfo:Pfl01_5087"/>
<dbReference type="eggNOG" id="COG0222">
    <property type="taxonomic scope" value="Bacteria"/>
</dbReference>
<dbReference type="HOGENOM" id="CLU_086499_3_2_6"/>
<dbReference type="Proteomes" id="UP000002704">
    <property type="component" value="Chromosome"/>
</dbReference>
<dbReference type="GO" id="GO:0022625">
    <property type="term" value="C:cytosolic large ribosomal subunit"/>
    <property type="evidence" value="ECO:0007669"/>
    <property type="project" value="TreeGrafter"/>
</dbReference>
<dbReference type="GO" id="GO:0003729">
    <property type="term" value="F:mRNA binding"/>
    <property type="evidence" value="ECO:0007669"/>
    <property type="project" value="TreeGrafter"/>
</dbReference>
<dbReference type="GO" id="GO:0003735">
    <property type="term" value="F:structural constituent of ribosome"/>
    <property type="evidence" value="ECO:0007669"/>
    <property type="project" value="InterPro"/>
</dbReference>
<dbReference type="GO" id="GO:0006412">
    <property type="term" value="P:translation"/>
    <property type="evidence" value="ECO:0007669"/>
    <property type="project" value="UniProtKB-UniRule"/>
</dbReference>
<dbReference type="CDD" id="cd00387">
    <property type="entry name" value="Ribosomal_L7_L12"/>
    <property type="match status" value="1"/>
</dbReference>
<dbReference type="FunFam" id="3.30.1390.10:FF:000001">
    <property type="entry name" value="50S ribosomal protein L7/L12"/>
    <property type="match status" value="1"/>
</dbReference>
<dbReference type="Gene3D" id="3.30.1390.10">
    <property type="match status" value="1"/>
</dbReference>
<dbReference type="Gene3D" id="1.20.5.710">
    <property type="entry name" value="Single helix bin"/>
    <property type="match status" value="1"/>
</dbReference>
<dbReference type="HAMAP" id="MF_00368">
    <property type="entry name" value="Ribosomal_bL12"/>
    <property type="match status" value="1"/>
</dbReference>
<dbReference type="InterPro" id="IPR000206">
    <property type="entry name" value="Ribosomal_bL12"/>
</dbReference>
<dbReference type="InterPro" id="IPR013823">
    <property type="entry name" value="Ribosomal_bL12_C"/>
</dbReference>
<dbReference type="InterPro" id="IPR014719">
    <property type="entry name" value="Ribosomal_bL12_C/ClpS-like"/>
</dbReference>
<dbReference type="InterPro" id="IPR008932">
    <property type="entry name" value="Ribosomal_bL12_oligo"/>
</dbReference>
<dbReference type="InterPro" id="IPR036235">
    <property type="entry name" value="Ribosomal_bL12_oligo_N_sf"/>
</dbReference>
<dbReference type="NCBIfam" id="TIGR00855">
    <property type="entry name" value="L12"/>
    <property type="match status" value="1"/>
</dbReference>
<dbReference type="PANTHER" id="PTHR45987">
    <property type="entry name" value="39S RIBOSOMAL PROTEIN L12"/>
    <property type="match status" value="1"/>
</dbReference>
<dbReference type="PANTHER" id="PTHR45987:SF4">
    <property type="entry name" value="LARGE RIBOSOMAL SUBUNIT PROTEIN BL12M"/>
    <property type="match status" value="1"/>
</dbReference>
<dbReference type="Pfam" id="PF00542">
    <property type="entry name" value="Ribosomal_L12"/>
    <property type="match status" value="1"/>
</dbReference>
<dbReference type="Pfam" id="PF16320">
    <property type="entry name" value="Ribosomal_L12_N"/>
    <property type="match status" value="1"/>
</dbReference>
<dbReference type="SUPFAM" id="SSF54736">
    <property type="entry name" value="ClpS-like"/>
    <property type="match status" value="1"/>
</dbReference>
<dbReference type="SUPFAM" id="SSF48300">
    <property type="entry name" value="Ribosomal protein L7/12, oligomerisation (N-terminal) domain"/>
    <property type="match status" value="1"/>
</dbReference>
<gene>
    <name evidence="1" type="primary">rplL</name>
    <name type="ordered locus">Pfl01_5087</name>
</gene>
<feature type="chain" id="PRO_0000243473" description="Large ribosomal subunit protein bL12">
    <location>
        <begin position="1"/>
        <end position="121"/>
    </location>
</feature>
<sequence length="121" mass="12614">MSLTNEQIIEAIGQKTVLEVVELIKAMEETFGVTAAVAAAGPAAAAAVVEEQTEFNVVLVEAGEKKVNVIKAVRELTGLGLKEAKEKVDGAPQVVAEGVSKEAAEDAKKKLEEAGAKVELK</sequence>
<keyword id="KW-0687">Ribonucleoprotein</keyword>
<keyword id="KW-0689">Ribosomal protein</keyword>
<organism>
    <name type="scientific">Pseudomonas fluorescens (strain Pf0-1)</name>
    <dbReference type="NCBI Taxonomy" id="205922"/>
    <lineage>
        <taxon>Bacteria</taxon>
        <taxon>Pseudomonadati</taxon>
        <taxon>Pseudomonadota</taxon>
        <taxon>Gammaproteobacteria</taxon>
        <taxon>Pseudomonadales</taxon>
        <taxon>Pseudomonadaceae</taxon>
        <taxon>Pseudomonas</taxon>
    </lineage>
</organism>
<protein>
    <recommendedName>
        <fullName evidence="1">Large ribosomal subunit protein bL12</fullName>
    </recommendedName>
    <alternativeName>
        <fullName evidence="2">50S ribosomal protein L7/L12</fullName>
    </alternativeName>
</protein>
<proteinExistence type="inferred from homology"/>
<comment type="function">
    <text evidence="1">Forms part of the ribosomal stalk which helps the ribosome interact with GTP-bound translation factors. Is thus essential for accurate translation.</text>
</comment>
<comment type="subunit">
    <text evidence="1">Homodimer. Part of the ribosomal stalk of the 50S ribosomal subunit. Forms a multimeric L10(L12)X complex, where L10 forms an elongated spine to which 2 to 4 L12 dimers bind in a sequential fashion. Binds GTP-bound translation factors.</text>
</comment>
<comment type="similarity">
    <text evidence="1">Belongs to the bacterial ribosomal protein bL12 family.</text>
</comment>
<accession>Q3K5Y0</accession>